<sequence>MSKKINGFEVLGEVAWLWASSPLHRKWPLSLLAINVLPAIESNQYVLLKRDGFPIAFCSWANLNLENEIKYLDDVASLVADDWTSGDRRWFIDWIAPFGDSAALYKHMRDNFPNELFRAIRVDPDSRVGKISEFHGGKIDKKLASKIFQQYHFELMSELKNKQNFKFSLVNS</sequence>
<feature type="chain" id="PRO_0000217883" description="RTX-I toxin-activating lysine-acyltransferase ApxIC">
    <location>
        <begin position="1"/>
        <end position="172"/>
    </location>
</feature>
<feature type="active site" evidence="5">
    <location>
        <position position="24"/>
    </location>
</feature>
<feature type="active site" evidence="5">
    <location>
        <position position="93"/>
    </location>
</feature>
<feature type="mutagenesis site" description="Does not affect homodimerization." evidence="1">
    <original>G</original>
    <variation>A</variation>
    <location>
        <position position="12"/>
    </location>
</feature>
<feature type="mutagenesis site" description="Abolished homodimerization." evidence="1">
    <original>G</original>
    <variation>E</variation>
    <location>
        <position position="12"/>
    </location>
</feature>
<feature type="mutagenesis site" description="Abolished homodimerization." evidence="1">
    <original>A</original>
    <variation>E</variation>
    <location>
        <position position="15"/>
    </location>
</feature>
<feature type="mutagenesis site" description="Does not affect homodimerization." evidence="1">
    <original>A</original>
    <variation>E</variation>
    <location>
        <position position="19"/>
    </location>
</feature>
<feature type="mutagenesis site" description="Slightly reduced ability to activate the protoxin." evidence="1">
    <location>
        <position position="21"/>
    </location>
</feature>
<feature type="mutagenesis site" description="Strongly reduced protein-lysine acyltransferase activity." evidence="1">
    <original>H</original>
    <variation>A</variation>
    <location>
        <position position="24"/>
    </location>
</feature>
<feature type="mutagenesis site" description="Strongly reduced protein-lysine acyltransferase activity." evidence="1">
    <original>N</original>
    <variation>A</variation>
    <location>
        <position position="35"/>
    </location>
</feature>
<feature type="mutagenesis site" description="Does not affect the protein-lysine acyltransferase activity." evidence="1">
    <original>C</original>
    <variation>A</variation>
    <location>
        <position position="58"/>
    </location>
</feature>
<feature type="mutagenesis site" description="Abolished protein-lysine acyltransferase activity." evidence="1">
    <original>D</original>
    <variation>A</variation>
    <location>
        <position position="93"/>
    </location>
</feature>
<feature type="mutagenesis site" description="Abolished protein-lysine acyltransferase activity. Abolished binding to acyl-CoA." evidence="1">
    <original>R</original>
    <variation>A</variation>
    <location>
        <position position="121"/>
    </location>
</feature>
<feature type="helix" evidence="7">
    <location>
        <begin position="3"/>
        <end position="19"/>
    </location>
</feature>
<feature type="helix" evidence="7">
    <location>
        <begin position="24"/>
        <end position="26"/>
    </location>
</feature>
<feature type="helix" evidence="7">
    <location>
        <begin position="29"/>
        <end position="42"/>
    </location>
</feature>
<feature type="strand" evidence="7">
    <location>
        <begin position="45"/>
        <end position="63"/>
    </location>
</feature>
<feature type="helix" evidence="7">
    <location>
        <begin position="65"/>
        <end position="73"/>
    </location>
</feature>
<feature type="helix" evidence="7">
    <location>
        <begin position="80"/>
        <end position="83"/>
    </location>
</feature>
<feature type="strand" evidence="7">
    <location>
        <begin position="87"/>
        <end position="95"/>
    </location>
</feature>
<feature type="helix" evidence="7">
    <location>
        <begin position="101"/>
        <end position="111"/>
    </location>
</feature>
<feature type="strand" evidence="7">
    <location>
        <begin position="116"/>
        <end position="122"/>
    </location>
</feature>
<feature type="strand" evidence="7">
    <location>
        <begin position="124"/>
        <end position="135"/>
    </location>
</feature>
<feature type="helix" evidence="7">
    <location>
        <begin position="141"/>
        <end position="163"/>
    </location>
</feature>
<feature type="strand" evidence="7">
    <location>
        <begin position="166"/>
        <end position="171"/>
    </location>
</feature>
<accession>P55132</accession>
<protein>
    <recommendedName>
        <fullName>RTX-I toxin-activating lysine-acyltransferase ApxIC</fullName>
        <ecNumber evidence="1">2.3.1.-</ecNumber>
    </recommendedName>
    <alternativeName>
        <fullName>APX-IC</fullName>
    </alternativeName>
    <alternativeName>
        <fullName>Cytolysin IC</fullName>
        <shortName>CLY-IC</shortName>
    </alternativeName>
    <alternativeName>
        <fullName>HLY-IC</fullName>
    </alternativeName>
    <alternativeName>
        <fullName>RTX-I toxin determinant C</fullName>
    </alternativeName>
    <alternativeName>
        <fullName>Toxin RTX-I-activating protein C</fullName>
    </alternativeName>
</protein>
<name>RTX1C_ACTPL</name>
<proteinExistence type="evidence at protein level"/>
<reference key="1">
    <citation type="journal article" date="1994" name="Gene">
        <title>Sequence analysis and transcription of the apxI operon (hemolysin I) from Actinobacillus pleuropneumoniae.</title>
        <authorList>
            <person name="Frey J."/>
            <person name="Haldimann A."/>
            <person name="Nicolet J."/>
            <person name="Boffini A."/>
            <person name="Prentki P."/>
        </authorList>
    </citation>
    <scope>NUCLEOTIDE SEQUENCE [GENOMIC DNA]</scope>
    <source>
        <strain>ATCC 27088 / DSM 13472 / CCM 5869 / S4074 / Serotype 1</strain>
    </source>
</reference>
<reference key="2">
    <citation type="journal article" date="1993" name="Infect. Immun.">
        <title>Structural analysis of the Actinobacillus pleuropneumoniae-RTX-toxin I (ApxI) operon.</title>
        <authorList>
            <person name="Jansen R."/>
            <person name="Briaire J."/>
            <person name="Kamp E.M."/>
            <person name="Gielkens A.L.J."/>
            <person name="Smits M.A."/>
        </authorList>
    </citation>
    <scope>NUCLEOTIDE SEQUENCE [GENOMIC DNA]</scope>
    <source>
        <strain>Isolate CVI 13261 / Serotype 9</strain>
    </source>
</reference>
<reference key="3">
    <citation type="submission" date="1995-01" db="EMBL/GenBank/DDBJ databases">
        <authorList>
            <person name="Chin N."/>
            <person name="Frey J."/>
            <person name="Chang C.F."/>
            <person name="Chang Y.-F."/>
        </authorList>
    </citation>
    <scope>NUCLEOTIDE SEQUENCE [GENOMIC DNA]</scope>
    <source>
        <strain>ATCC 27088 / DSM 13472 / CCM 5869 / S4074 / Serotype 1</strain>
    </source>
</reference>
<reference evidence="6" key="4">
    <citation type="journal article" date="2015" name="Proc. Natl. Acad. Sci. U.S.A.">
        <title>Structure of a bacterial toxin-activating acyltransferase.</title>
        <authorList>
            <person name="Greene N.P."/>
            <person name="Crow A."/>
            <person name="Hughes C."/>
            <person name="Koronakis V."/>
        </authorList>
    </citation>
    <scope>X-RAY CRYSTALLOGRAPHY (2.15 ANGSTROMS) OF 2-172</scope>
    <scope>FUNCTION</scope>
    <scope>CATALYTIC ACTIVITY</scope>
    <scope>SUBUNIT</scope>
    <scope>MUTAGENESIS OF GLY-12; ALA-15; ALA-19; SER-21; HIS-24; ASN-35; CYS-58; ASP-93 AND ARG-121</scope>
</reference>
<keyword id="KW-0002">3D-structure</keyword>
<keyword id="KW-0012">Acyltransferase</keyword>
<keyword id="KW-0204">Cytolysis</keyword>
<keyword id="KW-0963">Cytoplasm</keyword>
<keyword id="KW-0354">Hemolysis</keyword>
<keyword id="KW-0808">Transferase</keyword>
<evidence type="ECO:0000269" key="1">
    <source>
    </source>
</evidence>
<evidence type="ECO:0000303" key="2">
    <source>
    </source>
</evidence>
<evidence type="ECO:0000303" key="3">
    <source>
    </source>
</evidence>
<evidence type="ECO:0000305" key="4"/>
<evidence type="ECO:0000305" key="5">
    <source>
    </source>
</evidence>
<evidence type="ECO:0007744" key="6">
    <source>
        <dbReference type="PDB" id="4WHN"/>
    </source>
</evidence>
<evidence type="ECO:0007829" key="7">
    <source>
        <dbReference type="PDB" id="4WHN"/>
    </source>
</evidence>
<gene>
    <name evidence="3" type="primary">apxIC</name>
    <name evidence="2" type="synonym">apxC</name>
    <name type="synonym">clyIC</name>
    <name type="synonym">hlyIC</name>
</gene>
<organism>
    <name type="scientific">Actinobacillus pleuropneumoniae</name>
    <name type="common">Haemophilus pleuropneumoniae</name>
    <dbReference type="NCBI Taxonomy" id="715"/>
    <lineage>
        <taxon>Bacteria</taxon>
        <taxon>Pseudomonadati</taxon>
        <taxon>Pseudomonadota</taxon>
        <taxon>Gammaproteobacteria</taxon>
        <taxon>Pasteurellales</taxon>
        <taxon>Pasteurellaceae</taxon>
        <taxon>Actinobacillus</taxon>
    </lineage>
</organism>
<comment type="function">
    <text evidence="1">Protein-lysine acyltransferase that catalyzes fatty acylation of the protoxin, thereby converting it to the active toxin.</text>
</comment>
<comment type="catalytic activity">
    <reaction evidence="1">
        <text>a fatty acyl-[ACP] + L-lysyl-[protein] = N(6)-(fatty acyl)-L-lysyl-[protein] + holo-[ACP] + H(+)</text>
        <dbReference type="Rhea" id="RHEA:70667"/>
        <dbReference type="Rhea" id="RHEA-COMP:9685"/>
        <dbReference type="Rhea" id="RHEA-COMP:9752"/>
        <dbReference type="Rhea" id="RHEA-COMP:14125"/>
        <dbReference type="Rhea" id="RHEA-COMP:17946"/>
        <dbReference type="ChEBI" id="CHEBI:15378"/>
        <dbReference type="ChEBI" id="CHEBI:29969"/>
        <dbReference type="ChEBI" id="CHEBI:64479"/>
        <dbReference type="ChEBI" id="CHEBI:138651"/>
        <dbReference type="ChEBI" id="CHEBI:189854"/>
    </reaction>
    <physiologicalReaction direction="left-to-right" evidence="1">
        <dbReference type="Rhea" id="RHEA:70668"/>
    </physiologicalReaction>
</comment>
<comment type="subunit">
    <text evidence="1">Homodimer.</text>
</comment>
<comment type="subcellular location">
    <subcellularLocation>
        <location evidence="4">Cytoplasm</location>
    </subcellularLocation>
</comment>
<comment type="similarity">
    <text evidence="4">Belongs to the RTX toxin acyltransferase family.</text>
</comment>
<dbReference type="EC" id="2.3.1.-" evidence="1"/>
<dbReference type="EMBL" id="X68595">
    <property type="protein sequence ID" value="CAA48585.1"/>
    <property type="molecule type" value="Genomic_DNA"/>
</dbReference>
<dbReference type="EMBL" id="X73117">
    <property type="protein sequence ID" value="CAA51547.1"/>
    <property type="molecule type" value="Genomic_DNA"/>
</dbReference>
<dbReference type="EMBL" id="U05042">
    <property type="protein sequence ID" value="AAB05033.1"/>
    <property type="molecule type" value="Genomic_DNA"/>
</dbReference>
<dbReference type="EMBL" id="U04954">
    <property type="protein sequence ID" value="AAB17219.1"/>
    <property type="molecule type" value="Genomic_DNA"/>
</dbReference>
<dbReference type="PIR" id="I39644">
    <property type="entry name" value="I39644"/>
</dbReference>
<dbReference type="RefSeq" id="WP_009875272.1">
    <property type="nucleotide sequence ID" value="NZ_JBHLVK010000015.1"/>
</dbReference>
<dbReference type="PDB" id="4WHN">
    <property type="method" value="X-ray"/>
    <property type="resolution" value="2.15 A"/>
    <property type="chains" value="A/B/C/D=2-172"/>
</dbReference>
<dbReference type="PDBsum" id="4WHN"/>
<dbReference type="SMR" id="P55132"/>
<dbReference type="GeneID" id="48599660"/>
<dbReference type="EvolutionaryTrace" id="P55132"/>
<dbReference type="GO" id="GO:0005737">
    <property type="term" value="C:cytoplasm"/>
    <property type="evidence" value="ECO:0007669"/>
    <property type="project" value="UniProtKB-SubCell"/>
</dbReference>
<dbReference type="GO" id="GO:0016410">
    <property type="term" value="F:N-acyltransferase activity"/>
    <property type="evidence" value="ECO:0000314"/>
    <property type="project" value="UniProtKB"/>
</dbReference>
<dbReference type="GO" id="GO:0042803">
    <property type="term" value="F:protein homodimerization activity"/>
    <property type="evidence" value="ECO:0000314"/>
    <property type="project" value="UniProtKB"/>
</dbReference>
<dbReference type="GO" id="GO:0031640">
    <property type="term" value="P:killing of cells of another organism"/>
    <property type="evidence" value="ECO:0007669"/>
    <property type="project" value="UniProtKB-KW"/>
</dbReference>
<dbReference type="GO" id="GO:0009404">
    <property type="term" value="P:toxin metabolic process"/>
    <property type="evidence" value="ECO:0000314"/>
    <property type="project" value="UniProtKB"/>
</dbReference>
<dbReference type="InterPro" id="IPR003996">
    <property type="entry name" value="RTX_toxin-activating_protC_bac"/>
</dbReference>
<dbReference type="Pfam" id="PF02794">
    <property type="entry name" value="HlyC"/>
    <property type="match status" value="1"/>
</dbReference>
<dbReference type="PRINTS" id="PR01489">
    <property type="entry name" value="RTXTOXINC"/>
</dbReference>